<name>RL28_SELRU</name>
<protein>
    <recommendedName>
        <fullName evidence="1">Large ribosomal subunit protein bL28</fullName>
    </recommendedName>
    <alternativeName>
        <fullName>50S ribosomal protein L28</fullName>
    </alternativeName>
</protein>
<reference key="1">
    <citation type="journal article" date="2000" name="J. Bacteriol.">
        <title>Gene cloning and molecular characterization of lysine decarboxylase from Selenomonas ruminantium delineate its evolutionary relationship to ornithine decarboxylases from eukaryotes.</title>
        <authorList>
            <person name="Takatsuka Y."/>
            <person name="Yamaguchi Y."/>
            <person name="Ono M."/>
            <person name="Kamio Y."/>
        </authorList>
    </citation>
    <scope>NUCLEOTIDE SEQUENCE [GENOMIC DNA]</scope>
</reference>
<organism>
    <name type="scientific">Selenomonas ruminantium</name>
    <dbReference type="NCBI Taxonomy" id="971"/>
    <lineage>
        <taxon>Bacteria</taxon>
        <taxon>Bacillati</taxon>
        <taxon>Bacillota</taxon>
        <taxon>Negativicutes</taxon>
        <taxon>Selenomonadales</taxon>
        <taxon>Selenomonadaceae</taxon>
        <taxon>Selenomonas</taxon>
    </lineage>
</organism>
<comment type="similarity">
    <text evidence="1">Belongs to the bacterial ribosomal protein bL28 family.</text>
</comment>
<proteinExistence type="inferred from homology"/>
<evidence type="ECO:0000305" key="1"/>
<accession>O50656</accession>
<gene>
    <name type="primary">rpmB</name>
</gene>
<keyword id="KW-0687">Ribonucleoprotein</keyword>
<keyword id="KW-0689">Ribosomal protein</keyword>
<feature type="chain" id="PRO_0000178544" description="Large ribosomal subunit protein bL28">
    <location>
        <begin position="1"/>
        <end position="63"/>
    </location>
</feature>
<dbReference type="EMBL" id="AB011029">
    <property type="protein sequence ID" value="BAA24922.1"/>
    <property type="molecule type" value="Genomic_DNA"/>
</dbReference>
<dbReference type="RefSeq" id="WP_014424781.1">
    <property type="nucleotide sequence ID" value="NZ_SVCA01000001.1"/>
</dbReference>
<dbReference type="SMR" id="O50656"/>
<dbReference type="STRING" id="971.SAMN02910356_00599"/>
<dbReference type="GeneID" id="61462532"/>
<dbReference type="eggNOG" id="COG0227">
    <property type="taxonomic scope" value="Bacteria"/>
</dbReference>
<dbReference type="OMA" id="KRTWSPN"/>
<dbReference type="OrthoDB" id="9805609at2"/>
<dbReference type="GO" id="GO:1990904">
    <property type="term" value="C:ribonucleoprotein complex"/>
    <property type="evidence" value="ECO:0007669"/>
    <property type="project" value="UniProtKB-KW"/>
</dbReference>
<dbReference type="GO" id="GO:0005840">
    <property type="term" value="C:ribosome"/>
    <property type="evidence" value="ECO:0007669"/>
    <property type="project" value="UniProtKB-KW"/>
</dbReference>
<dbReference type="GO" id="GO:0003735">
    <property type="term" value="F:structural constituent of ribosome"/>
    <property type="evidence" value="ECO:0007669"/>
    <property type="project" value="InterPro"/>
</dbReference>
<dbReference type="GO" id="GO:0006412">
    <property type="term" value="P:translation"/>
    <property type="evidence" value="ECO:0007669"/>
    <property type="project" value="UniProtKB-UniRule"/>
</dbReference>
<dbReference type="FunFam" id="2.30.170.40:FF:000002">
    <property type="entry name" value="50S ribosomal protein L28"/>
    <property type="match status" value="1"/>
</dbReference>
<dbReference type="Gene3D" id="2.30.170.40">
    <property type="entry name" value="Ribosomal protein L28/L24"/>
    <property type="match status" value="1"/>
</dbReference>
<dbReference type="HAMAP" id="MF_00373">
    <property type="entry name" value="Ribosomal_bL28"/>
    <property type="match status" value="1"/>
</dbReference>
<dbReference type="InterPro" id="IPR050096">
    <property type="entry name" value="Bacterial_rp_bL28"/>
</dbReference>
<dbReference type="InterPro" id="IPR026569">
    <property type="entry name" value="Ribosomal_bL28"/>
</dbReference>
<dbReference type="InterPro" id="IPR034704">
    <property type="entry name" value="Ribosomal_bL28/bL31-like_sf"/>
</dbReference>
<dbReference type="InterPro" id="IPR001383">
    <property type="entry name" value="Ribosomal_bL28_bact-type"/>
</dbReference>
<dbReference type="InterPro" id="IPR037147">
    <property type="entry name" value="Ribosomal_bL28_sf"/>
</dbReference>
<dbReference type="NCBIfam" id="TIGR00009">
    <property type="entry name" value="L28"/>
    <property type="match status" value="1"/>
</dbReference>
<dbReference type="PANTHER" id="PTHR39080">
    <property type="entry name" value="50S RIBOSOMAL PROTEIN L28"/>
    <property type="match status" value="1"/>
</dbReference>
<dbReference type="PANTHER" id="PTHR39080:SF1">
    <property type="entry name" value="LARGE RIBOSOMAL SUBUNIT PROTEIN BL28A"/>
    <property type="match status" value="1"/>
</dbReference>
<dbReference type="Pfam" id="PF00830">
    <property type="entry name" value="Ribosomal_L28"/>
    <property type="match status" value="1"/>
</dbReference>
<dbReference type="SUPFAM" id="SSF143800">
    <property type="entry name" value="L28p-like"/>
    <property type="match status" value="1"/>
</dbReference>
<sequence>MASVCEICAKGELSGNNVSHSHLKTRRTWKPNIQRVRAVVEGEVKRVNVCTRCLRSGKVQRAL</sequence>